<proteinExistence type="evidence at protein level"/>
<name>CYC6_THEVB</name>
<keyword id="KW-0002">3D-structure</keyword>
<keyword id="KW-0249">Electron transport</keyword>
<keyword id="KW-0349">Heme</keyword>
<keyword id="KW-0408">Iron</keyword>
<keyword id="KW-0479">Metal-binding</keyword>
<keyword id="KW-0602">Photosynthesis</keyword>
<keyword id="KW-1185">Reference proteome</keyword>
<keyword id="KW-0732">Signal</keyword>
<keyword id="KW-0793">Thylakoid</keyword>
<keyword id="KW-0813">Transport</keyword>
<sequence>MKKRFISVCAIAIALLVSLTPAALAADLANGAKVFSGNCAACHMGGGNVVMANKTLKKEALEQFGMYSEDAIIYQVQHGKNAMPAFAGRLTDEQIQDVAAYVLDQAAKGWAG</sequence>
<accession>P0A3X9</accession>
<accession>P56534</accession>
<accession>Q9F1M0</accession>
<organism>
    <name type="scientific">Thermosynechococcus vestitus (strain NIES-2133 / IAM M-273 / BP-1)</name>
    <dbReference type="NCBI Taxonomy" id="197221"/>
    <lineage>
        <taxon>Bacteria</taxon>
        <taxon>Bacillati</taxon>
        <taxon>Cyanobacteriota</taxon>
        <taxon>Cyanophyceae</taxon>
        <taxon>Acaryochloridales</taxon>
        <taxon>Thermosynechococcaceae</taxon>
        <taxon>Thermosynechococcus</taxon>
    </lineage>
</organism>
<comment type="function">
    <text evidence="1">Functions as an electron carrier between membrane-bound cytochrome b6-f and photosystem I in oxygenic photosynthesis.</text>
</comment>
<comment type="subunit">
    <text evidence="1">Monomer.</text>
</comment>
<comment type="subcellular location">
    <subcellularLocation>
        <location evidence="2">Cellular thylakoid lumen</location>
    </subcellularLocation>
</comment>
<comment type="PTM">
    <text evidence="1">Binds 1 heme c group covalently per subunit.</text>
</comment>
<comment type="similarity">
    <text evidence="2">Belongs to the cytochrome c family. PetJ subfamily.</text>
</comment>
<protein>
    <recommendedName>
        <fullName>Cytochrome c6</fullName>
    </recommendedName>
    <alternativeName>
        <fullName>Cytochrome c-553</fullName>
    </alternativeName>
    <alternativeName>
        <fullName>Cytochrome c553</fullName>
    </alternativeName>
    <alternativeName>
        <fullName>Soluble cytochrome f</fullName>
    </alternativeName>
</protein>
<reference key="1">
    <citation type="journal article" date="1999" name="Plant Cell Physiol.">
        <title>Cloning of the genes for cytochrome c550 and a c550-like protein from the thermophilic cyanobacterium Synechococcus elongatus.</title>
        <authorList>
            <person name="Katoh H."/>
            <person name="Itoh S."/>
            <person name="Shen J.-R."/>
            <person name="Ikeuchi M."/>
        </authorList>
    </citation>
    <scope>NUCLEOTIDE SEQUENCE [GENOMIC DNA]</scope>
</reference>
<reference key="2">
    <citation type="journal article" date="2002" name="DNA Res.">
        <title>Complete genome structure of the thermophilic cyanobacterium Thermosynechococcus elongatus BP-1.</title>
        <authorList>
            <person name="Nakamura Y."/>
            <person name="Kaneko T."/>
            <person name="Sato S."/>
            <person name="Ikeuchi M."/>
            <person name="Katoh H."/>
            <person name="Sasamoto S."/>
            <person name="Watanabe A."/>
            <person name="Iriguchi M."/>
            <person name="Kawashima K."/>
            <person name="Kimura T."/>
            <person name="Kishida Y."/>
            <person name="Kiyokawa C."/>
            <person name="Kohara M."/>
            <person name="Matsumoto M."/>
            <person name="Matsuno A."/>
            <person name="Nakazaki N."/>
            <person name="Shimpo S."/>
            <person name="Sugimoto M."/>
            <person name="Takeuchi C."/>
            <person name="Yamada M."/>
            <person name="Tabata S."/>
        </authorList>
    </citation>
    <scope>NUCLEOTIDE SEQUENCE [LARGE SCALE GENOMIC DNA]</scope>
    <source>
        <strain>NIES-2133 / IAM M-273 / BP-1</strain>
    </source>
</reference>
<gene>
    <name type="primary">petJ</name>
    <name type="ordered locus">tll1283</name>
</gene>
<evidence type="ECO:0000250" key="1"/>
<evidence type="ECO:0000305" key="2"/>
<evidence type="ECO:0007829" key="3">
    <source>
        <dbReference type="PDB" id="6TR1"/>
    </source>
</evidence>
<dbReference type="EMBL" id="AB052597">
    <property type="protein sequence ID" value="BAB20061.1"/>
    <property type="molecule type" value="Genomic_DNA"/>
</dbReference>
<dbReference type="EMBL" id="BA000039">
    <property type="protein sequence ID" value="BAC08835.1"/>
    <property type="molecule type" value="Genomic_DNA"/>
</dbReference>
<dbReference type="RefSeq" id="NP_682073.1">
    <property type="nucleotide sequence ID" value="NC_004113.1"/>
</dbReference>
<dbReference type="RefSeq" id="WP_011057123.1">
    <property type="nucleotide sequence ID" value="NC_004113.1"/>
</dbReference>
<dbReference type="PDB" id="6TR1">
    <property type="method" value="X-ray"/>
    <property type="resolution" value="1.70 A"/>
    <property type="chains" value="A/E=26-111, C=26-112"/>
</dbReference>
<dbReference type="PDB" id="6TSY">
    <property type="method" value="X-ray"/>
    <property type="resolution" value="2.25 A"/>
    <property type="chains" value="A/B/C/D/E/F=26-112"/>
</dbReference>
<dbReference type="PDBsum" id="6TR1"/>
<dbReference type="PDBsum" id="6TSY"/>
<dbReference type="SMR" id="P0A3X9"/>
<dbReference type="STRING" id="197221.gene:10747879"/>
<dbReference type="EnsemblBacteria" id="BAC08835">
    <property type="protein sequence ID" value="BAC08835"/>
    <property type="gene ID" value="BAC08835"/>
</dbReference>
<dbReference type="KEGG" id="tel:tll1283"/>
<dbReference type="PATRIC" id="fig|197221.4.peg.1350"/>
<dbReference type="eggNOG" id="COG2010">
    <property type="taxonomic scope" value="Bacteria"/>
</dbReference>
<dbReference type="Proteomes" id="UP000000440">
    <property type="component" value="Chromosome"/>
</dbReference>
<dbReference type="GO" id="GO:0031979">
    <property type="term" value="C:plasma membrane-derived thylakoid lumen"/>
    <property type="evidence" value="ECO:0007669"/>
    <property type="project" value="UniProtKB-SubCell"/>
</dbReference>
<dbReference type="GO" id="GO:0009055">
    <property type="term" value="F:electron transfer activity"/>
    <property type="evidence" value="ECO:0007669"/>
    <property type="project" value="UniProtKB-UniRule"/>
</dbReference>
<dbReference type="GO" id="GO:0020037">
    <property type="term" value="F:heme binding"/>
    <property type="evidence" value="ECO:0007669"/>
    <property type="project" value="InterPro"/>
</dbReference>
<dbReference type="GO" id="GO:0005506">
    <property type="term" value="F:iron ion binding"/>
    <property type="evidence" value="ECO:0007669"/>
    <property type="project" value="InterPro"/>
</dbReference>
<dbReference type="GO" id="GO:0015979">
    <property type="term" value="P:photosynthesis"/>
    <property type="evidence" value="ECO:0007669"/>
    <property type="project" value="UniProtKB-UniRule"/>
</dbReference>
<dbReference type="FunFam" id="1.10.760.10:FF:000038">
    <property type="entry name" value="Cytochrome c6"/>
    <property type="match status" value="1"/>
</dbReference>
<dbReference type="Gene3D" id="1.10.760.10">
    <property type="entry name" value="Cytochrome c-like domain"/>
    <property type="match status" value="1"/>
</dbReference>
<dbReference type="HAMAP" id="MF_00594">
    <property type="entry name" value="Cytc_PetJ"/>
    <property type="match status" value="1"/>
</dbReference>
<dbReference type="InterPro" id="IPR009056">
    <property type="entry name" value="Cyt_c-like_dom"/>
</dbReference>
<dbReference type="InterPro" id="IPR036909">
    <property type="entry name" value="Cyt_c-like_dom_sf"/>
</dbReference>
<dbReference type="InterPro" id="IPR023655">
    <property type="entry name" value="Cyt_C6"/>
</dbReference>
<dbReference type="InterPro" id="IPR008168">
    <property type="entry name" value="Cyt_C_IC"/>
</dbReference>
<dbReference type="NCBIfam" id="NF045930">
    <property type="entry name" value="Cytc6PetJCyano"/>
    <property type="match status" value="1"/>
</dbReference>
<dbReference type="PANTHER" id="PTHR34688">
    <property type="entry name" value="CYTOCHROME C6, CHLOROPLASTIC"/>
    <property type="match status" value="1"/>
</dbReference>
<dbReference type="PANTHER" id="PTHR34688:SF2">
    <property type="entry name" value="CYTOCHROME C6, CHLOROPLASTIC"/>
    <property type="match status" value="1"/>
</dbReference>
<dbReference type="Pfam" id="PF13442">
    <property type="entry name" value="Cytochrome_CBB3"/>
    <property type="match status" value="1"/>
</dbReference>
<dbReference type="PRINTS" id="PR00605">
    <property type="entry name" value="CYTCHROMECIC"/>
</dbReference>
<dbReference type="SUPFAM" id="SSF46626">
    <property type="entry name" value="Cytochrome c"/>
    <property type="match status" value="1"/>
</dbReference>
<dbReference type="PROSITE" id="PS51007">
    <property type="entry name" value="CYTC"/>
    <property type="match status" value="1"/>
</dbReference>
<feature type="signal peptide" evidence="1">
    <location>
        <begin position="1"/>
        <end position="25"/>
    </location>
</feature>
<feature type="chain" id="PRO_0000023857" description="Cytochrome c6">
    <location>
        <begin position="26"/>
        <end position="112"/>
    </location>
</feature>
<feature type="binding site" description="covalent" evidence="1">
    <location>
        <position position="39"/>
    </location>
    <ligand>
        <name>heme c</name>
        <dbReference type="ChEBI" id="CHEBI:61717"/>
    </ligand>
</feature>
<feature type="binding site" description="covalent" evidence="1">
    <location>
        <position position="42"/>
    </location>
    <ligand>
        <name>heme c</name>
        <dbReference type="ChEBI" id="CHEBI:61717"/>
    </ligand>
</feature>
<feature type="binding site" description="axial binding residue" evidence="1">
    <location>
        <position position="43"/>
    </location>
    <ligand>
        <name>heme c</name>
        <dbReference type="ChEBI" id="CHEBI:61717"/>
    </ligand>
    <ligandPart>
        <name>Fe</name>
        <dbReference type="ChEBI" id="CHEBI:18248"/>
    </ligandPart>
</feature>
<feature type="binding site" description="axial binding residue" evidence="1">
    <location>
        <position position="83"/>
    </location>
    <ligand>
        <name>heme c</name>
        <dbReference type="ChEBI" id="CHEBI:61717"/>
    </ligand>
    <ligandPart>
        <name>Fe</name>
        <dbReference type="ChEBI" id="CHEBI:18248"/>
    </ligandPart>
</feature>
<feature type="helix" evidence="3">
    <location>
        <begin position="28"/>
        <end position="38"/>
    </location>
</feature>
<feature type="helix" evidence="3">
    <location>
        <begin position="40"/>
        <end position="43"/>
    </location>
</feature>
<feature type="helix" evidence="3">
    <location>
        <begin position="44"/>
        <end position="46"/>
    </location>
</feature>
<feature type="strand" evidence="3">
    <location>
        <begin position="49"/>
        <end position="51"/>
    </location>
</feature>
<feature type="helix" evidence="3">
    <location>
        <begin position="58"/>
        <end position="63"/>
    </location>
</feature>
<feature type="helix" evidence="3">
    <location>
        <begin position="69"/>
        <end position="78"/>
    </location>
</feature>
<feature type="turn" evidence="3">
    <location>
        <begin position="87"/>
        <end position="89"/>
    </location>
</feature>
<feature type="helix" evidence="3">
    <location>
        <begin position="92"/>
        <end position="108"/>
    </location>
</feature>